<evidence type="ECO:0000269" key="1">
    <source>
    </source>
</evidence>
<evidence type="ECO:0000305" key="2"/>
<name>AUR31_RANRN</name>
<proteinExistence type="evidence at protein level"/>
<comment type="function">
    <text evidence="1">Has antimicrobial activity against L.lactis, L.innocua, M.luteus, S.aureus, S.epidermidis and S.uberis. Probably acts by disturbing membrane functions with its amphipathic structure. Shows anticancer activity.</text>
</comment>
<comment type="subcellular location">
    <subcellularLocation>
        <location>Secreted</location>
    </subcellularLocation>
</comment>
<comment type="tissue specificity">
    <text>Expressed by the skin dorsal glands.</text>
</comment>
<comment type="similarity">
    <text evidence="2">Belongs to the frog skin active peptide (FSAP) family. Aurein subfamily.</text>
</comment>
<reference key="1">
    <citation type="journal article" date="2000" name="Eur. J. Biochem.">
        <title>The antibiotic and anticancer active aurein peptides from the australian bell frogs Litoria aurea and Litoria raniformis the solution structure of aurein 1.2.</title>
        <authorList>
            <person name="Rozek T."/>
            <person name="Wegener K.L."/>
            <person name="Bowie J.H."/>
            <person name="Olver I.N."/>
            <person name="Carver J.A."/>
            <person name="Wallace J.C."/>
            <person name="Tyler M.J."/>
        </authorList>
    </citation>
    <scope>PROTEIN SEQUENCE</scope>
    <scope>AMIDATION AT ILE-17</scope>
    <scope>FUNCTION</scope>
    <source>
        <tissue>Skin secretion</tissue>
    </source>
</reference>
<keyword id="KW-0027">Amidation</keyword>
<keyword id="KW-0878">Amphibian defense peptide</keyword>
<keyword id="KW-0044">Antibiotic</keyword>
<keyword id="KW-0929">Antimicrobial</keyword>
<keyword id="KW-0903">Direct protein sequencing</keyword>
<keyword id="KW-0964">Secreted</keyword>
<protein>
    <recommendedName>
        <fullName>Aurein-3.1</fullName>
    </recommendedName>
    <component>
        <recommendedName>
            <fullName>Aurein-3.1.1</fullName>
        </recommendedName>
    </component>
    <component>
        <recommendedName>
            <fullName>Aurein-3.1.2</fullName>
        </recommendedName>
    </component>
</protein>
<dbReference type="GO" id="GO:0005576">
    <property type="term" value="C:extracellular region"/>
    <property type="evidence" value="ECO:0007669"/>
    <property type="project" value="UniProtKB-SubCell"/>
</dbReference>
<dbReference type="GO" id="GO:0042742">
    <property type="term" value="P:defense response to bacterium"/>
    <property type="evidence" value="ECO:0007669"/>
    <property type="project" value="UniProtKB-KW"/>
</dbReference>
<dbReference type="InterPro" id="IPR013157">
    <property type="entry name" value="Aurein_antimicrobial_peptide"/>
</dbReference>
<dbReference type="Pfam" id="PF08256">
    <property type="entry name" value="Antimicrobial20"/>
    <property type="match status" value="1"/>
</dbReference>
<accession>P69020</accession>
<accession>P82394</accession>
<feature type="peptide" id="PRO_0000010151" description="Aurein-3.1">
    <location>
        <begin position="1"/>
        <end position="17"/>
    </location>
</feature>
<feature type="peptide" id="PRO_0000010152" description="Aurein-3.1.1">
    <location>
        <begin position="1"/>
        <end position="14"/>
    </location>
</feature>
<feature type="peptide" id="PRO_0000010153" description="Aurein-3.1.2">
    <location>
        <begin position="3"/>
        <end position="17"/>
    </location>
</feature>
<feature type="modified residue" description="Isoleucine amide" evidence="1">
    <location>
        <position position="17"/>
    </location>
</feature>
<sequence length="17" mass="1739">GLFDIVKKIAGHIAGSI</sequence>
<organism>
    <name type="scientific">Ranoidea raniformis</name>
    <name type="common">Southern bell frog</name>
    <name type="synonym">Litoria raniformis</name>
    <dbReference type="NCBI Taxonomy" id="116057"/>
    <lineage>
        <taxon>Eukaryota</taxon>
        <taxon>Metazoa</taxon>
        <taxon>Chordata</taxon>
        <taxon>Craniata</taxon>
        <taxon>Vertebrata</taxon>
        <taxon>Euteleostomi</taxon>
        <taxon>Amphibia</taxon>
        <taxon>Batrachia</taxon>
        <taxon>Anura</taxon>
        <taxon>Neobatrachia</taxon>
        <taxon>Hyloidea</taxon>
        <taxon>Hylidae</taxon>
        <taxon>Pelodryadinae</taxon>
        <taxon>Ranoidea</taxon>
    </lineage>
</organism>